<keyword id="KW-0024">Alternative initiation</keyword>
<keyword id="KW-0472">Membrane</keyword>
<keyword id="KW-0496">Mitochondrion</keyword>
<keyword id="KW-1000">Mitochondrion outer membrane</keyword>
<keyword id="KW-1185">Reference proteome</keyword>
<keyword id="KW-0812">Transmembrane</keyword>
<keyword id="KW-1133">Transmembrane helix</keyword>
<name>MISFA_HUMAN</name>
<protein>
    <recommendedName>
        <fullName>Mitochondrial sheath formation-associated protein</fullName>
    </recommendedName>
    <alternativeName>
        <fullName evidence="3">Putative transmembrane protein SPTY2D1OS</fullName>
    </alternativeName>
    <alternativeName>
        <fullName evidence="4">SPTY2D1 antisense RNA 1</fullName>
    </alternativeName>
    <alternativeName>
        <fullName evidence="4">SPTY2D1 opposite strand</fullName>
    </alternativeName>
</protein>
<gene>
    <name evidence="4" type="primary">MISFA</name>
    <name evidence="4" type="synonym">SPTY2D1-AS1</name>
    <name type="synonym">SPTY2D1OS</name>
</gene>
<dbReference type="EMBL" id="AC112694">
    <property type="status" value="NOT_ANNOTATED_CDS"/>
    <property type="molecule type" value="Genomic_DNA"/>
</dbReference>
<dbReference type="EMBL" id="CH471064">
    <property type="protein sequence ID" value="EAW68375.1"/>
    <property type="molecule type" value="Genomic_DNA"/>
</dbReference>
<dbReference type="CCDS" id="CCDS86186.1">
    <molecule id="A0A0U1RRN3-1"/>
</dbReference>
<dbReference type="RefSeq" id="NP_001342499.1">
    <molecule id="A0A0U1RRN3-1"/>
    <property type="nucleotide sequence ID" value="NM_001355570.4"/>
</dbReference>
<dbReference type="SMR" id="A0A0U1RRN3"/>
<dbReference type="FunCoup" id="A0A0U1RRN3">
    <property type="interactions" value="2"/>
</dbReference>
<dbReference type="STRING" id="9606.ENSP00000489616"/>
<dbReference type="BioMuta" id="SPTY2D1OS"/>
<dbReference type="MassIVE" id="A0A0U1RRN3"/>
<dbReference type="PeptideAtlas" id="A0A0U1RRN3"/>
<dbReference type="Ensembl" id="ENST00000501599.3">
    <molecule id="A0A0U1RRN3-1"/>
    <property type="protein sequence ID" value="ENSP00000489079.1"/>
    <property type="gene ID" value="ENSG00000247595.5"/>
</dbReference>
<dbReference type="Ensembl" id="ENST00000542172.1">
    <molecule id="A0A0U1RRN3-2"/>
    <property type="protein sequence ID" value="ENSP00000489253.1"/>
    <property type="gene ID" value="ENSG00000247595.5"/>
</dbReference>
<dbReference type="Ensembl" id="ENST00000635674.2">
    <molecule id="A0A0U1RRN3-1"/>
    <property type="protein sequence ID" value="ENSP00000489616.1"/>
    <property type="gene ID" value="ENSG00000247595.5"/>
</dbReference>
<dbReference type="Ensembl" id="ENST00000636011.1">
    <molecule id="A0A0U1RRN3-2"/>
    <property type="protein sequence ID" value="ENSP00000490951.1"/>
    <property type="gene ID" value="ENSG00000247595.5"/>
</dbReference>
<dbReference type="GeneID" id="100506540"/>
<dbReference type="MANE-Select" id="ENST00000635674.2">
    <property type="protein sequence ID" value="ENSP00000489616.1"/>
    <property type="RefSeq nucleotide sequence ID" value="NM_001355570.4"/>
    <property type="RefSeq protein sequence ID" value="NP_001342499.1"/>
</dbReference>
<dbReference type="AGR" id="HGNC:44122"/>
<dbReference type="GeneCards" id="MISFA"/>
<dbReference type="HGNC" id="HGNC:44122">
    <property type="gene designation" value="MISFA"/>
</dbReference>
<dbReference type="HPA" id="ENSG00000247595">
    <property type="expression patterns" value="Tissue enriched (testis)"/>
</dbReference>
<dbReference type="MIM" id="620764">
    <property type="type" value="gene"/>
</dbReference>
<dbReference type="neXtProt" id="NX_A0A0U1RRN3"/>
<dbReference type="OpenTargets" id="ENSG00000247595"/>
<dbReference type="VEuPathDB" id="HostDB:ENSG00000247595"/>
<dbReference type="GeneTree" id="ENSGT01100000263734"/>
<dbReference type="InParanoid" id="A0A0U1RRN3"/>
<dbReference type="PAN-GO" id="A0A0U1RRN3">
    <property type="GO annotations" value="0 GO annotations based on evolutionary models"/>
</dbReference>
<dbReference type="Pharos" id="A0A0U1RRN3">
    <property type="development level" value="Tdark"/>
</dbReference>
<dbReference type="PRO" id="PR:A0A0U1RRN3"/>
<dbReference type="Proteomes" id="UP000005640">
    <property type="component" value="Chromosome 11"/>
</dbReference>
<dbReference type="Bgee" id="ENSG00000247595">
    <property type="expression patterns" value="Expressed in sperm and 100 other cell types or tissues"/>
</dbReference>
<dbReference type="ExpressionAtlas" id="A0A0U1RRN3">
    <property type="expression patterns" value="baseline and differential"/>
</dbReference>
<dbReference type="GO" id="GO:0005741">
    <property type="term" value="C:mitochondrial outer membrane"/>
    <property type="evidence" value="ECO:0007669"/>
    <property type="project" value="UniProtKB-SubCell"/>
</dbReference>
<sequence>MIVLGWMFFVGLVCYMGTFPELMPPTLKWQERWPVQESKTQLRRRALGEDLLQNHVEGI</sequence>
<feature type="chain" id="PRO_0000444502" description="Mitochondrial sheath formation-associated protein">
    <location>
        <begin position="1"/>
        <end position="59"/>
    </location>
</feature>
<feature type="transmembrane region" description="Helical" evidence="2">
    <location>
        <begin position="2"/>
        <end position="22"/>
    </location>
</feature>
<feature type="splice variant" id="VSP_061795" description="In isoform Polluks.">
    <original>LGWMFFVGLVCYMGTFPELMPPTLKWQERWPVQESKT</original>
    <variation>VLWMLLIAGTMWKGYKYPPGGTPVEVSKDDPGEVMQL</variation>
    <location>
        <begin position="4"/>
        <end position="40"/>
    </location>
</feature>
<feature type="splice variant" id="VSP_061796" description="In isoform Polluks.">
    <location>
        <begin position="41"/>
        <end position="59"/>
    </location>
</feature>
<feature type="topological domain" description="Mitochondrial intermembrane" evidence="1">
    <location sequence="A0A0U1RRN3-2">
        <begin position="1"/>
        <end position="6"/>
    </location>
</feature>
<feature type="transmembrane region" description="Helical" evidence="2">
    <location sequence="A0A0U1RRN3-2">
        <begin position="7"/>
        <end position="23"/>
    </location>
</feature>
<feature type="topological domain" description="Cytoplasmic" evidence="1">
    <location sequence="A0A0U1RRN3-2">
        <begin position="24"/>
        <end position="40"/>
    </location>
</feature>
<evidence type="ECO:0000250" key="1">
    <source>
        <dbReference type="UniProtKB" id="Q8C5Y2"/>
    </source>
</evidence>
<evidence type="ECO:0000255" key="2"/>
<evidence type="ECO:0000305" key="3"/>
<evidence type="ECO:0000312" key="4">
    <source>
        <dbReference type="HGNC" id="HGNC:44122"/>
    </source>
</evidence>
<reference key="1">
    <citation type="journal article" date="2006" name="Nature">
        <title>Human chromosome 11 DNA sequence and analysis including novel gene identification.</title>
        <authorList>
            <person name="Taylor T.D."/>
            <person name="Noguchi H."/>
            <person name="Totoki Y."/>
            <person name="Toyoda A."/>
            <person name="Kuroki Y."/>
            <person name="Dewar K."/>
            <person name="Lloyd C."/>
            <person name="Itoh T."/>
            <person name="Takeda T."/>
            <person name="Kim D.-W."/>
            <person name="She X."/>
            <person name="Barlow K.F."/>
            <person name="Bloom T."/>
            <person name="Bruford E."/>
            <person name="Chang J.L."/>
            <person name="Cuomo C.A."/>
            <person name="Eichler E."/>
            <person name="FitzGerald M.G."/>
            <person name="Jaffe D.B."/>
            <person name="LaButti K."/>
            <person name="Nicol R."/>
            <person name="Park H.-S."/>
            <person name="Seaman C."/>
            <person name="Sougnez C."/>
            <person name="Yang X."/>
            <person name="Zimmer A.R."/>
            <person name="Zody M.C."/>
            <person name="Birren B.W."/>
            <person name="Nusbaum C."/>
            <person name="Fujiyama A."/>
            <person name="Hattori M."/>
            <person name="Rogers J."/>
            <person name="Lander E.S."/>
            <person name="Sakaki Y."/>
        </authorList>
    </citation>
    <scope>NUCLEOTIDE SEQUENCE [LARGE SCALE GENOMIC DNA]</scope>
</reference>
<reference key="2">
    <citation type="submission" date="2005-09" db="EMBL/GenBank/DDBJ databases">
        <authorList>
            <person name="Mural R.J."/>
            <person name="Istrail S."/>
            <person name="Sutton G.G."/>
            <person name="Florea L."/>
            <person name="Halpern A.L."/>
            <person name="Mobarry C.M."/>
            <person name="Lippert R."/>
            <person name="Walenz B."/>
            <person name="Shatkay H."/>
            <person name="Dew I."/>
            <person name="Miller J.R."/>
            <person name="Flanigan M.J."/>
            <person name="Edwards N.J."/>
            <person name="Bolanos R."/>
            <person name="Fasulo D."/>
            <person name="Halldorsson B.V."/>
            <person name="Hannenhalli S."/>
            <person name="Turner R."/>
            <person name="Yooseph S."/>
            <person name="Lu F."/>
            <person name="Nusskern D.R."/>
            <person name="Shue B.C."/>
            <person name="Zheng X.H."/>
            <person name="Zhong F."/>
            <person name="Delcher A.L."/>
            <person name="Huson D.H."/>
            <person name="Kravitz S.A."/>
            <person name="Mouchard L."/>
            <person name="Reinert K."/>
            <person name="Remington K.A."/>
            <person name="Clark A.G."/>
            <person name="Waterman M.S."/>
            <person name="Eichler E.E."/>
            <person name="Adams M.D."/>
            <person name="Hunkapiller M.W."/>
            <person name="Myers E.W."/>
            <person name="Venter J.C."/>
        </authorList>
    </citation>
    <scope>NUCLEOTIDE SEQUENCE [LARGE SCALE GENOMIC DNA]</scope>
</reference>
<proteinExistence type="inferred from homology"/>
<comment type="function">
    <molecule>Isoform Kastor</molecule>
    <text evidence="1">Regulates sperm development. May be involved in mitochondrial sheath formation.</text>
</comment>
<comment type="function">
    <molecule>Isoform Polluks</molecule>
    <text evidence="1">Regulates sperm development. May be involved in mitochondrial sheath formation.</text>
</comment>
<comment type="subunit">
    <molecule>Isoform Kastor</molecule>
    <text evidence="1">Interacts with VDAC3.</text>
</comment>
<comment type="subunit">
    <molecule>Isoform Polluks</molecule>
    <text evidence="1">Interacts with VDAC3.</text>
</comment>
<comment type="subcellular location">
    <molecule>Isoform Kastor</molecule>
    <subcellularLocation>
        <location evidence="1">Mitochondrion outer membrane</location>
        <topology evidence="2">Single-pass membrane protein</topology>
    </subcellularLocation>
</comment>
<comment type="subcellular location">
    <molecule>Isoform Polluks</molecule>
    <subcellularLocation>
        <location evidence="1">Mitochondrion outer membrane</location>
        <topology evidence="2">Single-pass membrane protein</topology>
    </subcellularLocation>
</comment>
<comment type="alternative products">
    <event type="alternative initiation"/>
    <isoform>
        <id>A0A0U1RRN3-1</id>
        <name evidence="1">Kastor</name>
        <sequence type="displayed"/>
    </isoform>
    <isoform>
        <id>A0A0U1RRN3-2</id>
        <name evidence="1">Polluks</name>
        <sequence type="described" ref="VSP_061795 VSP_061796"/>
    </isoform>
</comment>
<comment type="miscellaneous">
    <text evidence="1">Isoform Kastor and isoform Polluks are conserved only in mammals.</text>
</comment>
<comment type="caution">
    <text evidence="1">The locus MISFA encodes two different polypeptides Kastor and Polluks, with different transcription start sites and different ORFs.</text>
</comment>
<accession>A0A0U1RRN3</accession>
<accession>A0A0U1RQZ7</accession>
<organism>
    <name type="scientific">Homo sapiens</name>
    <name type="common">Human</name>
    <dbReference type="NCBI Taxonomy" id="9606"/>
    <lineage>
        <taxon>Eukaryota</taxon>
        <taxon>Metazoa</taxon>
        <taxon>Chordata</taxon>
        <taxon>Craniata</taxon>
        <taxon>Vertebrata</taxon>
        <taxon>Euteleostomi</taxon>
        <taxon>Mammalia</taxon>
        <taxon>Eutheria</taxon>
        <taxon>Euarchontoglires</taxon>
        <taxon>Primates</taxon>
        <taxon>Haplorrhini</taxon>
        <taxon>Catarrhini</taxon>
        <taxon>Hominidae</taxon>
        <taxon>Homo</taxon>
    </lineage>
</organism>